<keyword id="KW-0378">Hydrolase</keyword>
<keyword id="KW-0472">Membrane</keyword>
<keyword id="KW-0645">Protease</keyword>
<keyword id="KW-1185">Reference proteome</keyword>
<keyword id="KW-0677">Repeat</keyword>
<keyword id="KW-0720">Serine protease</keyword>
<keyword id="KW-0812">Transmembrane</keyword>
<keyword id="KW-1133">Transmembrane helix</keyword>
<comment type="function">
    <text evidence="1">May be involved in regulated intramembrane proteolysis and the subsequent release of functional polypeptides from their membrane anchors.</text>
</comment>
<comment type="catalytic activity">
    <reaction>
        <text>Cleaves type-1 transmembrane domains using a catalytic dyad composed of serine and histidine that are contributed by different transmembrane domains.</text>
        <dbReference type="EC" id="3.4.21.105"/>
    </reaction>
</comment>
<comment type="subcellular location">
    <subcellularLocation>
        <location evidence="4">Membrane</location>
        <topology evidence="4">Multi-pass membrane protein</topology>
    </subcellularLocation>
</comment>
<comment type="developmental stage">
    <text>At 8 dpc, expression is limited to the developing central nervous system (CNS). From 9 dpc on detected in the ventral forebrain, pretectum, dorsal diencephalon, metencephalon, the ventral spinal neural tube, in the ectoderm of the developing mandibular arches and the developing hindgut.</text>
</comment>
<comment type="similarity">
    <text evidence="4">Belongs to the peptidase S54 family.</text>
</comment>
<reference key="1">
    <citation type="journal article" date="2002" name="Mech. Dev.">
        <title>Cloning and expression of Ventrhoid, a novel vertebrate homologue of the Drosophila EGF pathway gene Rhomboid.</title>
        <authorList>
            <person name="Jaszai J."/>
            <person name="Brand M."/>
        </authorList>
    </citation>
    <scope>NUCLEOTIDE SEQUENCE [MRNA]</scope>
    <source>
        <tissue>Brain</tissue>
    </source>
</reference>
<reference key="2">
    <citation type="journal article" date="2004" name="Genome Res.">
        <title>The status, quality, and expansion of the NIH full-length cDNA project: the Mammalian Gene Collection (MGC).</title>
        <authorList>
            <consortium name="The MGC Project Team"/>
        </authorList>
    </citation>
    <scope>NUCLEOTIDE SEQUENCE [LARGE SCALE MRNA]</scope>
    <source>
        <strain>C57BL/6J</strain>
        <tissue>Brain</tissue>
    </source>
</reference>
<gene>
    <name type="primary">Rhbdl3</name>
    <name type="synonym">Rhbdl4</name>
    <name type="synonym">Vrho</name>
</gene>
<proteinExistence type="evidence at transcript level"/>
<dbReference type="EC" id="3.4.21.105"/>
<dbReference type="EMBL" id="AJ313479">
    <property type="protein sequence ID" value="CAC86144.1"/>
    <property type="molecule type" value="mRNA"/>
</dbReference>
<dbReference type="EMBL" id="BC054784">
    <property type="protein sequence ID" value="AAH54784.1"/>
    <property type="molecule type" value="mRNA"/>
</dbReference>
<dbReference type="EMBL" id="BC056969">
    <property type="protein sequence ID" value="AAH56969.1"/>
    <property type="molecule type" value="mRNA"/>
</dbReference>
<dbReference type="CCDS" id="CCDS25131.1"/>
<dbReference type="RefSeq" id="NP_631974.1">
    <property type="nucleotide sequence ID" value="NM_139228.3"/>
</dbReference>
<dbReference type="SMR" id="P58873"/>
<dbReference type="FunCoup" id="P58873">
    <property type="interactions" value="81"/>
</dbReference>
<dbReference type="STRING" id="10090.ENSMUSP00000017836"/>
<dbReference type="BindingDB" id="P58873"/>
<dbReference type="MEROPS" id="S54.006"/>
<dbReference type="iPTMnet" id="P58873"/>
<dbReference type="PhosphoSitePlus" id="P58873"/>
<dbReference type="PaxDb" id="10090-ENSMUSP00000017836"/>
<dbReference type="ProteomicsDB" id="253269"/>
<dbReference type="Antibodypedia" id="71802">
    <property type="antibodies" value="7 antibodies from 7 providers"/>
</dbReference>
<dbReference type="DNASU" id="246104"/>
<dbReference type="Ensembl" id="ENSMUST00000017836.8">
    <property type="protein sequence ID" value="ENSMUSP00000017836.8"/>
    <property type="gene ID" value="ENSMUSG00000017692.9"/>
</dbReference>
<dbReference type="GeneID" id="246104"/>
<dbReference type="KEGG" id="mmu:246104"/>
<dbReference type="UCSC" id="uc007klt.2">
    <property type="organism name" value="mouse"/>
</dbReference>
<dbReference type="AGR" id="MGI:2179276"/>
<dbReference type="CTD" id="162494"/>
<dbReference type="MGI" id="MGI:2179276">
    <property type="gene designation" value="Rhbdl3"/>
</dbReference>
<dbReference type="VEuPathDB" id="HostDB:ENSMUSG00000017692"/>
<dbReference type="eggNOG" id="KOG0027">
    <property type="taxonomic scope" value="Eukaryota"/>
</dbReference>
<dbReference type="eggNOG" id="KOG2289">
    <property type="taxonomic scope" value="Eukaryota"/>
</dbReference>
<dbReference type="GeneTree" id="ENSGT00940000158838"/>
<dbReference type="HOGENOM" id="CLU_048023_2_1_1"/>
<dbReference type="InParanoid" id="P58873"/>
<dbReference type="OMA" id="MAPEDHW"/>
<dbReference type="OrthoDB" id="418595at2759"/>
<dbReference type="PhylomeDB" id="P58873"/>
<dbReference type="TreeFam" id="TF313540"/>
<dbReference type="BioGRID-ORCS" id="246104">
    <property type="hits" value="0 hits in 78 CRISPR screens"/>
</dbReference>
<dbReference type="ChiTaRS" id="Rhbdl3">
    <property type="organism name" value="mouse"/>
</dbReference>
<dbReference type="PRO" id="PR:P58873"/>
<dbReference type="Proteomes" id="UP000000589">
    <property type="component" value="Chromosome 11"/>
</dbReference>
<dbReference type="RNAct" id="P58873">
    <property type="molecule type" value="protein"/>
</dbReference>
<dbReference type="Bgee" id="ENSMUSG00000017692">
    <property type="expression patterns" value="Expressed in ventricular zone and 193 other cell types or tissues"/>
</dbReference>
<dbReference type="GO" id="GO:0016020">
    <property type="term" value="C:membrane"/>
    <property type="evidence" value="ECO:0007669"/>
    <property type="project" value="UniProtKB-SubCell"/>
</dbReference>
<dbReference type="GO" id="GO:0005509">
    <property type="term" value="F:calcium ion binding"/>
    <property type="evidence" value="ECO:0007669"/>
    <property type="project" value="InterPro"/>
</dbReference>
<dbReference type="GO" id="GO:0004252">
    <property type="term" value="F:serine-type endopeptidase activity"/>
    <property type="evidence" value="ECO:0007669"/>
    <property type="project" value="InterPro"/>
</dbReference>
<dbReference type="GO" id="GO:0006508">
    <property type="term" value="P:proteolysis"/>
    <property type="evidence" value="ECO:0007669"/>
    <property type="project" value="UniProtKB-KW"/>
</dbReference>
<dbReference type="FunFam" id="1.10.238.10:FF:000343">
    <property type="entry name" value="RHBDL3 isoform 3"/>
    <property type="match status" value="1"/>
</dbReference>
<dbReference type="FunFam" id="1.20.1540.10:FF:000002">
    <property type="entry name" value="Rhomboid, veinlet-like 3 (Drosophila)"/>
    <property type="match status" value="1"/>
</dbReference>
<dbReference type="Gene3D" id="1.10.238.10">
    <property type="entry name" value="EF-hand"/>
    <property type="match status" value="1"/>
</dbReference>
<dbReference type="Gene3D" id="1.20.1540.10">
    <property type="entry name" value="Rhomboid-like"/>
    <property type="match status" value="1"/>
</dbReference>
<dbReference type="InterPro" id="IPR011992">
    <property type="entry name" value="EF-hand-dom_pair"/>
</dbReference>
<dbReference type="InterPro" id="IPR002048">
    <property type="entry name" value="EF_hand_dom"/>
</dbReference>
<dbReference type="InterPro" id="IPR022764">
    <property type="entry name" value="Peptidase_S54_rhomboid_dom"/>
</dbReference>
<dbReference type="InterPro" id="IPR017213">
    <property type="entry name" value="Peptidase_S54_rhomboid_met"/>
</dbReference>
<dbReference type="InterPro" id="IPR035952">
    <property type="entry name" value="Rhomboid-like_sf"/>
</dbReference>
<dbReference type="InterPro" id="IPR051739">
    <property type="entry name" value="Rhomboid_IM_Serine_Proteases"/>
</dbReference>
<dbReference type="PANTHER" id="PTHR45840">
    <property type="entry name" value="RHOMBOID-RELATED PROTEIN"/>
    <property type="match status" value="1"/>
</dbReference>
<dbReference type="PANTHER" id="PTHR45840:SF5">
    <property type="entry name" value="RHOMBOID-RELATED PROTEIN 3"/>
    <property type="match status" value="1"/>
</dbReference>
<dbReference type="Pfam" id="PF13499">
    <property type="entry name" value="EF-hand_7"/>
    <property type="match status" value="1"/>
</dbReference>
<dbReference type="Pfam" id="PF01694">
    <property type="entry name" value="Rhomboid"/>
    <property type="match status" value="1"/>
</dbReference>
<dbReference type="PIRSF" id="PIRSF037470">
    <property type="entry name" value="Rhomboid"/>
    <property type="match status" value="1"/>
</dbReference>
<dbReference type="SUPFAM" id="SSF47473">
    <property type="entry name" value="EF-hand"/>
    <property type="match status" value="1"/>
</dbReference>
<dbReference type="SUPFAM" id="SSF144091">
    <property type="entry name" value="Rhomboid-like"/>
    <property type="match status" value="1"/>
</dbReference>
<dbReference type="PROSITE" id="PS50222">
    <property type="entry name" value="EF_HAND_2"/>
    <property type="match status" value="2"/>
</dbReference>
<feature type="chain" id="PRO_0000206178" description="Rhomboid-related protein 3">
    <location>
        <begin position="1"/>
        <end position="404"/>
    </location>
</feature>
<feature type="transmembrane region" description="Helical" evidence="2">
    <location>
        <begin position="164"/>
        <end position="184"/>
    </location>
</feature>
<feature type="transmembrane region" description="Helical" evidence="2">
    <location>
        <begin position="227"/>
        <end position="247"/>
    </location>
</feature>
<feature type="transmembrane region" description="Helical" evidence="2">
    <location>
        <begin position="250"/>
        <end position="270"/>
    </location>
</feature>
<feature type="transmembrane region" description="Helical" evidence="2">
    <location>
        <begin position="274"/>
        <end position="294"/>
    </location>
</feature>
<feature type="transmembrane region" description="Helical" evidence="2">
    <location>
        <begin position="305"/>
        <end position="324"/>
    </location>
</feature>
<feature type="transmembrane region" description="Helical" evidence="2">
    <location>
        <begin position="338"/>
        <end position="358"/>
    </location>
</feature>
<feature type="transmembrane region" description="Helical" evidence="2">
    <location>
        <begin position="371"/>
        <end position="391"/>
    </location>
</feature>
<feature type="domain" description="EF-hand 1" evidence="3">
    <location>
        <begin position="34"/>
        <end position="69"/>
    </location>
</feature>
<feature type="domain" description="EF-hand 2" evidence="3">
    <location>
        <begin position="70"/>
        <end position="105"/>
    </location>
</feature>
<feature type="active site" description="Nucleophile" evidence="1">
    <location>
        <position position="278"/>
    </location>
</feature>
<feature type="active site" evidence="1">
    <location>
        <position position="343"/>
    </location>
</feature>
<name>RHBL3_MOUSE</name>
<organism>
    <name type="scientific">Mus musculus</name>
    <name type="common">Mouse</name>
    <dbReference type="NCBI Taxonomy" id="10090"/>
    <lineage>
        <taxon>Eukaryota</taxon>
        <taxon>Metazoa</taxon>
        <taxon>Chordata</taxon>
        <taxon>Craniata</taxon>
        <taxon>Vertebrata</taxon>
        <taxon>Euteleostomi</taxon>
        <taxon>Mammalia</taxon>
        <taxon>Eutheria</taxon>
        <taxon>Euarchontoglires</taxon>
        <taxon>Glires</taxon>
        <taxon>Rodentia</taxon>
        <taxon>Myomorpha</taxon>
        <taxon>Muroidea</taxon>
        <taxon>Muridae</taxon>
        <taxon>Murinae</taxon>
        <taxon>Mus</taxon>
        <taxon>Mus</taxon>
    </lineage>
</organism>
<protein>
    <recommendedName>
        <fullName>Rhomboid-related protein 3</fullName>
        <ecNumber>3.4.21.105</ecNumber>
    </recommendedName>
    <alternativeName>
        <fullName>Ventrhoid transmembrane protein</fullName>
    </alternativeName>
</protein>
<evidence type="ECO:0000250" key="1"/>
<evidence type="ECO:0000255" key="2"/>
<evidence type="ECO:0000255" key="3">
    <source>
        <dbReference type="PROSITE-ProRule" id="PRU00448"/>
    </source>
</evidence>
<evidence type="ECO:0000305" key="4"/>
<accession>P58873</accession>
<sequence>MGEHPSPGPAVAACAEAERIEELEPEAEERLPAAPEDHWKVLFEKFDPGSTGYISTGKFRSLLESHSSKLDPHKKEVLLALADSHADGQICYQDFVNLMSNKRSNSFRQAILQGNRRLSSKALLEEKGLSLSQRLIRHVAYETLPREIDRKWYYDSYTCCPPPWFMITITLLEVALFLYNGVLLDQFVLQVTHPRYLKNSLVYHPQLRAQAWRYVTYIFMHAGVEQLGLNVALQLLVGVPLEMVHGATRIGLVYVAGVVAGSLAVSVADMTAPVVGSSGGVYALVSAHLANIVMNWSGMKCQFKLLRMAVALICMSMEFGRAVWLRFHPSAYPPCPHPSFVAHLGGVAVGITLGVVVLRNYEQRLQDQSLWWIFVTMYTIFVLFAVFWNIFAYTLLDLKLPPAP</sequence>